<gene>
    <name type="primary">eagI</name>
</gene>
<feature type="chain" id="PRO_0000210882" description="Acyl-homoserine-lactone synthase">
    <location>
        <begin position="1"/>
        <end position="216"/>
    </location>
</feature>
<keyword id="KW-0071">Autoinducer synthesis</keyword>
<keyword id="KW-0673">Quorum sensing</keyword>
<keyword id="KW-0949">S-adenosyl-L-methionine</keyword>
<keyword id="KW-0808">Transferase</keyword>
<organism>
    <name type="scientific">Enterobacter agglomerans</name>
    <name type="common">Erwinia herbicola</name>
    <name type="synonym">Pantoea agglomerans</name>
    <dbReference type="NCBI Taxonomy" id="549"/>
    <lineage>
        <taxon>Bacteria</taxon>
        <taxon>Pseudomonadati</taxon>
        <taxon>Pseudomonadota</taxon>
        <taxon>Gammaproteobacteria</taxon>
        <taxon>Enterobacterales</taxon>
        <taxon>Erwiniaceae</taxon>
        <taxon>Pantoea</taxon>
        <taxon>Pantoea agglomerans group</taxon>
    </lineage>
</organism>
<accession>P33881</accession>
<dbReference type="EC" id="2.3.1.184"/>
<dbReference type="EMBL" id="X74300">
    <property type="protein sequence ID" value="CAA52353.1"/>
    <property type="molecule type" value="Genomic_DNA"/>
</dbReference>
<dbReference type="PIR" id="S35945">
    <property type="entry name" value="S35945"/>
</dbReference>
<dbReference type="PIR" id="S39625">
    <property type="entry name" value="S39625"/>
</dbReference>
<dbReference type="SMR" id="P33881"/>
<dbReference type="GO" id="GO:0061579">
    <property type="term" value="F:N-acyl homoserine lactone synthase activity"/>
    <property type="evidence" value="ECO:0007669"/>
    <property type="project" value="UniProtKB-EC"/>
</dbReference>
<dbReference type="GO" id="GO:0009372">
    <property type="term" value="P:quorum sensing"/>
    <property type="evidence" value="ECO:0007669"/>
    <property type="project" value="UniProtKB-KW"/>
</dbReference>
<dbReference type="GO" id="GO:0007165">
    <property type="term" value="P:signal transduction"/>
    <property type="evidence" value="ECO:0007669"/>
    <property type="project" value="TreeGrafter"/>
</dbReference>
<dbReference type="Gene3D" id="3.40.630.30">
    <property type="match status" value="1"/>
</dbReference>
<dbReference type="InterPro" id="IPR016181">
    <property type="entry name" value="Acyl_CoA_acyltransferase"/>
</dbReference>
<dbReference type="InterPro" id="IPR018311">
    <property type="entry name" value="Autoind_synth_CS"/>
</dbReference>
<dbReference type="InterPro" id="IPR001690">
    <property type="entry name" value="Autoind_synthase"/>
</dbReference>
<dbReference type="PANTHER" id="PTHR39322">
    <property type="entry name" value="ACYL-HOMOSERINE-LACTONE SYNTHASE"/>
    <property type="match status" value="1"/>
</dbReference>
<dbReference type="PANTHER" id="PTHR39322:SF1">
    <property type="entry name" value="ISOVALERYL-HOMOSERINE LACTONE SYNTHASE"/>
    <property type="match status" value="1"/>
</dbReference>
<dbReference type="Pfam" id="PF00765">
    <property type="entry name" value="Autoind_synth"/>
    <property type="match status" value="1"/>
</dbReference>
<dbReference type="PRINTS" id="PR01549">
    <property type="entry name" value="AUTOINDCRSYN"/>
</dbReference>
<dbReference type="SUPFAM" id="SSF55729">
    <property type="entry name" value="Acyl-CoA N-acyltransferases (Nat)"/>
    <property type="match status" value="1"/>
</dbReference>
<dbReference type="PROSITE" id="PS00949">
    <property type="entry name" value="AUTOINDUCER_SYNTH_1"/>
    <property type="match status" value="1"/>
</dbReference>
<dbReference type="PROSITE" id="PS51187">
    <property type="entry name" value="AUTOINDUCER_SYNTH_2"/>
    <property type="match status" value="1"/>
</dbReference>
<reference key="1">
    <citation type="journal article" date="1993" name="Mol. Microbiol.">
        <title>A novel strategy for the isolation of luxI homologues: evidence for the widespread distribution of a LuxR:LuxI superfamily in enteric bacteria.</title>
        <authorList>
            <person name="Swift S."/>
            <person name="Winson M.K."/>
            <person name="Chan P.F."/>
            <person name="Bainton N.J."/>
            <person name="Birdsall M."/>
            <person name="Reeves P.J."/>
            <person name="Rees C.E.D."/>
            <person name="Chhabra S.R."/>
            <person name="Hill P.J."/>
            <person name="Throup J.P."/>
            <person name="Bycroft B.W."/>
            <person name="Salmond G.P.C."/>
            <person name="Williams P."/>
            <person name="Stewart G.S.A.B."/>
        </authorList>
    </citation>
    <scope>NUCLEOTIDE SEQUENCE [GENOMIC DNA]</scope>
</reference>
<comment type="function">
    <text>Required for the synthesis of OHHL (N-(3-oxohexanoyl)-L-homoserine lactone), an autoinducer molecule which binds to a yet uncharacterized transcriptional regulator.</text>
</comment>
<comment type="catalytic activity">
    <reaction>
        <text>a fatty acyl-[ACP] + S-adenosyl-L-methionine = an N-acyl-L-homoserine lactone + S-methyl-5'-thioadenosine + holo-[ACP] + H(+)</text>
        <dbReference type="Rhea" id="RHEA:10096"/>
        <dbReference type="Rhea" id="RHEA-COMP:9685"/>
        <dbReference type="Rhea" id="RHEA-COMP:14125"/>
        <dbReference type="ChEBI" id="CHEBI:15378"/>
        <dbReference type="ChEBI" id="CHEBI:17509"/>
        <dbReference type="ChEBI" id="CHEBI:55474"/>
        <dbReference type="ChEBI" id="CHEBI:59789"/>
        <dbReference type="ChEBI" id="CHEBI:64479"/>
        <dbReference type="ChEBI" id="CHEBI:138651"/>
        <dbReference type="EC" id="2.3.1.184"/>
    </reaction>
</comment>
<comment type="similarity">
    <text evidence="1">Belongs to the autoinducer synthase family.</text>
</comment>
<evidence type="ECO:0000255" key="1">
    <source>
        <dbReference type="PROSITE-ProRule" id="PRU00533"/>
    </source>
</evidence>
<sequence>MLEIFDVSYNDLTERRSEDLYKLRKITFKDRLDWAVNCSNDMEFDEFDNSGTRYMLGIYDNQLVCSVRFIDLRLPNMITHTFQHLFGDVKLPEGDYIESSRFFVDKNRAKALLGSRYPISYVLFLSMINYARHHGHTGIYTIVSRAMLTIAKRSGWEIEVIKEGFVSENEPIYLLRLPIDCHNQHLLAKRIRDQSESNIAALCQWPMSLTVTPEQV</sequence>
<name>EAGI_ENTAG</name>
<proteinExistence type="inferred from homology"/>
<protein>
    <recommendedName>
        <fullName>Acyl-homoserine-lactone synthase</fullName>
        <ecNumber>2.3.1.184</ecNumber>
    </recommendedName>
    <alternativeName>
        <fullName>Autoinducer synthesis protein EagI</fullName>
    </alternativeName>
</protein>